<reference key="1">
    <citation type="journal article" date="1985" name="Nucleic Acids Res.">
        <title>The genes for yeast ribosomal proteins S24 and L46 are adjacent and divergently transcribed.</title>
        <authorList>
            <person name="Leer R.J."/>
            <person name="van Raamsdonk-Duin M.M.C."/>
            <person name="Kraakman P."/>
            <person name="Mager W.H."/>
            <person name="Planta R.J."/>
        </authorList>
    </citation>
    <scope>NUCLEOTIDE SEQUENCE [GENOMIC DNA]</scope>
</reference>
<reference key="2">
    <citation type="journal article" date="1996" name="EMBO J.">
        <title>Complete nucleotide sequence of Saccharomyces cerevisiae chromosome X.</title>
        <authorList>
            <person name="Galibert F."/>
            <person name="Alexandraki D."/>
            <person name="Baur A."/>
            <person name="Boles E."/>
            <person name="Chalwatzis N."/>
            <person name="Chuat J.-C."/>
            <person name="Coster F."/>
            <person name="Cziepluch C."/>
            <person name="de Haan M."/>
            <person name="Domdey H."/>
            <person name="Durand P."/>
            <person name="Entian K.-D."/>
            <person name="Gatius M."/>
            <person name="Goffeau A."/>
            <person name="Grivell L.A."/>
            <person name="Hennemann A."/>
            <person name="Herbert C.J."/>
            <person name="Heumann K."/>
            <person name="Hilger F."/>
            <person name="Hollenberg C.P."/>
            <person name="Huang M.-E."/>
            <person name="Jacq C."/>
            <person name="Jauniaux J.-C."/>
            <person name="Katsoulou C."/>
            <person name="Kirchrath L."/>
            <person name="Kleine K."/>
            <person name="Kordes E."/>
            <person name="Koetter P."/>
            <person name="Liebl S."/>
            <person name="Louis E.J."/>
            <person name="Manus V."/>
            <person name="Mewes H.-W."/>
            <person name="Miosga T."/>
            <person name="Obermaier B."/>
            <person name="Perea J."/>
            <person name="Pohl T.M."/>
            <person name="Portetelle D."/>
            <person name="Pujol A."/>
            <person name="Purnelle B."/>
            <person name="Ramezani Rad M."/>
            <person name="Rasmussen S.W."/>
            <person name="Rose M."/>
            <person name="Rossau R."/>
            <person name="Schaaff-Gerstenschlaeger I."/>
            <person name="Smits P.H.M."/>
            <person name="Scarcez T."/>
            <person name="Soriano N."/>
            <person name="To Van D."/>
            <person name="Tzermia M."/>
            <person name="Van Broekhoven A."/>
            <person name="Vandenbol M."/>
            <person name="Wedler H."/>
            <person name="von Wettstein D."/>
            <person name="Wambutt R."/>
            <person name="Zagulski M."/>
            <person name="Zollner A."/>
            <person name="Karpfinger-Hartl L."/>
        </authorList>
    </citation>
    <scope>NUCLEOTIDE SEQUENCE [LARGE SCALE GENOMIC DNA]</scope>
    <source>
        <strain>ATCC 204508 / S288c</strain>
    </source>
</reference>
<reference key="3">
    <citation type="journal article" date="2014" name="G3 (Bethesda)">
        <title>The reference genome sequence of Saccharomyces cerevisiae: Then and now.</title>
        <authorList>
            <person name="Engel S.R."/>
            <person name="Dietrich F.S."/>
            <person name="Fisk D.G."/>
            <person name="Binkley G."/>
            <person name="Balakrishnan R."/>
            <person name="Costanzo M.C."/>
            <person name="Dwight S.S."/>
            <person name="Hitz B.C."/>
            <person name="Karra K."/>
            <person name="Nash R.S."/>
            <person name="Weng S."/>
            <person name="Wong E.D."/>
            <person name="Lloyd P."/>
            <person name="Skrzypek M.S."/>
            <person name="Miyasato S.R."/>
            <person name="Simison M."/>
            <person name="Cherry J.M."/>
        </authorList>
    </citation>
    <scope>GENOME REANNOTATION</scope>
    <source>
        <strain>ATCC 204508 / S288c</strain>
    </source>
</reference>
<reference key="4">
    <citation type="journal article" date="1998" name="Yeast">
        <title>The list of cytoplasmic ribosomal proteins of Saccharomyces cerevisiae.</title>
        <authorList>
            <person name="Planta R.J."/>
            <person name="Mager W.H."/>
        </authorList>
    </citation>
    <scope>NOMENCLATURE</scope>
    <scope>SUBUNIT</scope>
</reference>
<reference key="5">
    <citation type="journal article" date="1999" name="J. Biol. Chem.">
        <title>The action of N-terminal acetyltransferases on yeast ribosomal proteins.</title>
        <authorList>
            <person name="Arnold R.J."/>
            <person name="Polevoda B."/>
            <person name="Reilly J.P."/>
            <person name="Sherman F."/>
        </authorList>
    </citation>
    <scope>CLEAVAGE OF INITIATOR METHIONINE</scope>
</reference>
<reference key="6">
    <citation type="journal article" date="2012" name="FEBS J.">
        <title>Evidence that Yih1 resides in a complex with ribosomes.</title>
        <authorList>
            <person name="Waller T."/>
            <person name="Lee S.J."/>
            <person name="Sattlegger E."/>
        </authorList>
    </citation>
    <scope>INTERACTION WITH YIH1</scope>
</reference>
<reference key="7">
    <citation type="journal article" date="2012" name="Proc. Natl. Acad. Sci. U.S.A.">
        <title>N-terminal acetylome analyses and functional insights of the N-terminal acetyltransferase NatB.</title>
        <authorList>
            <person name="Van Damme P."/>
            <person name="Lasa M."/>
            <person name="Polevoda B."/>
            <person name="Gazquez C."/>
            <person name="Elosegui-Artola A."/>
            <person name="Kim D.S."/>
            <person name="De Juan-Pardo E."/>
            <person name="Demeyer K."/>
            <person name="Hole K."/>
            <person name="Larrea E."/>
            <person name="Timmerman E."/>
            <person name="Prieto J."/>
            <person name="Arnesen T."/>
            <person name="Sherman F."/>
            <person name="Gevaert K."/>
            <person name="Aldabe R."/>
        </authorList>
    </citation>
    <scope>IDENTIFICATION BY MASS SPECTROMETRY [LARGE SCALE ANALYSIS]</scope>
</reference>
<reference key="8">
    <citation type="journal article" date="2014" name="Curr. Opin. Struct. Biol.">
        <title>A new system for naming ribosomal proteins.</title>
        <authorList>
            <person name="Ban N."/>
            <person name="Beckmann R."/>
            <person name="Cate J.H.D."/>
            <person name="Dinman J.D."/>
            <person name="Dragon F."/>
            <person name="Ellis S.R."/>
            <person name="Lafontaine D.L.J."/>
            <person name="Lindahl L."/>
            <person name="Liljas A."/>
            <person name="Lipton J.M."/>
            <person name="McAlear M.A."/>
            <person name="Moore P.B."/>
            <person name="Noller H.F."/>
            <person name="Ortega J."/>
            <person name="Panse V.G."/>
            <person name="Ramakrishnan V."/>
            <person name="Spahn C.M.T."/>
            <person name="Steitz T.A."/>
            <person name="Tchorzewski M."/>
            <person name="Tollervey D."/>
            <person name="Warren A.J."/>
            <person name="Williamson J.R."/>
            <person name="Wilson D."/>
            <person name="Yonath A."/>
            <person name="Yusupov M."/>
        </authorList>
    </citation>
    <scope>NOMENCLATURE</scope>
</reference>
<reference key="9">
    <citation type="journal article" date="2010" name="Science">
        <title>Crystal structure of the eukaryotic ribosome.</title>
        <authorList>
            <person name="Ben-Shem A."/>
            <person name="Jenner L."/>
            <person name="Yusupova G."/>
            <person name="Yusupov M."/>
        </authorList>
    </citation>
    <scope>X-RAY CRYSTALLOGRAPHY (4.0 ANGSTROMS) OF 80S RIBOSOME</scope>
</reference>
<reference key="10">
    <citation type="journal article" date="2011" name="Science">
        <title>The structure of the eukaryotic ribosome at 3.0 A resolution.</title>
        <authorList>
            <person name="Ben-Shem A."/>
            <person name="Garreau de Loubresse N."/>
            <person name="Melnikov S."/>
            <person name="Jenner L."/>
            <person name="Yusupova G."/>
            <person name="Yusupov M."/>
        </authorList>
    </citation>
    <scope>X-RAY CRYSTALLOGRAPHY (3.0 ANGSTROMS) OF 80S RIBOSOME</scope>
    <scope>SUBUNIT</scope>
    <scope>SUBCELLULAR LOCATION</scope>
</reference>
<proteinExistence type="evidence at protein level"/>
<keyword id="KW-0002">3D-structure</keyword>
<keyword id="KW-0963">Cytoplasm</keyword>
<keyword id="KW-1185">Reference proteome</keyword>
<keyword id="KW-0687">Ribonucleoprotein</keyword>
<keyword id="KW-0689">Ribosomal protein</keyword>
<gene>
    <name evidence="6" type="primary">RPL39</name>
    <name type="synonym">RPL46</name>
    <name type="synonym">SPB2</name>
    <name type="ordered locus">YJL189W</name>
    <name type="ORF">J0360</name>
</gene>
<feature type="initiator methionine" description="Removed" evidence="2">
    <location>
        <position position="1"/>
    </location>
</feature>
<feature type="chain" id="PRO_0000127044" description="Large ribosomal subunit protein eL39">
    <location>
        <begin position="2"/>
        <end position="51"/>
    </location>
</feature>
<feature type="region of interest" description="Disordered" evidence="1">
    <location>
        <begin position="1"/>
        <end position="22"/>
    </location>
</feature>
<feature type="compositionally biased region" description="Basic residues" evidence="1">
    <location>
        <begin position="7"/>
        <end position="20"/>
    </location>
</feature>
<feature type="helix" evidence="10">
    <location>
        <begin position="7"/>
        <end position="18"/>
    </location>
</feature>
<feature type="helix" evidence="10">
    <location>
        <begin position="25"/>
        <end position="29"/>
    </location>
</feature>
<feature type="turn" evidence="10">
    <location>
        <begin position="44"/>
        <end position="46"/>
    </location>
</feature>
<comment type="function">
    <text evidence="8">Component of the ribosome, a large ribonucleoprotein complex responsible for the synthesis of proteins in the cell. The small ribosomal subunit (SSU) binds messenger RNAs (mRNAs) and translates the encoded message by selecting cognate aminoacyl-transfer RNA (tRNA) molecules. The large subunit (LSU) contains the ribosomal catalytic site termed the peptidyl transferase center (PTC), which catalyzes the formation of peptide bonds, thereby polymerizing the amino acids delivered by tRNAs into a polypeptide chain. The nascent polypeptides leave the ribosome through a tunnel in the LSU and interact with protein factors that function in enzymatic processing, targeting, and the membrane insertion of nascent chains at the exit of the ribosomal tunnel.</text>
</comment>
<comment type="subunit">
    <text evidence="3 4 9">Component of the large ribosomal subunit (LSU). Mature yeast ribosomes consist of a small (40S) and a large (60S) subunit. The 40S small subunit contains 1 molecule of ribosomal RNA (18S rRNA) and 33 different proteins (encoded by 57 genes). The large 60S subunit contains 3 rRNA molecules (25S, 5.8S and 5S rRNA) and 46 different proteins (encoded by 81 genes) (PubMed:22096102, PubMed:9559554). eL39 interacts with YIH1 (PubMed:22404850).</text>
</comment>
<comment type="subcellular location">
    <subcellularLocation>
        <location evidence="3">Cytoplasm</location>
    </subcellularLocation>
</comment>
<comment type="similarity">
    <text evidence="7">Belongs to the eukaryotic ribosomal protein eL39 family.</text>
</comment>
<organism>
    <name type="scientific">Saccharomyces cerevisiae (strain ATCC 204508 / S288c)</name>
    <name type="common">Baker's yeast</name>
    <dbReference type="NCBI Taxonomy" id="559292"/>
    <lineage>
        <taxon>Eukaryota</taxon>
        <taxon>Fungi</taxon>
        <taxon>Dikarya</taxon>
        <taxon>Ascomycota</taxon>
        <taxon>Saccharomycotina</taxon>
        <taxon>Saccharomycetes</taxon>
        <taxon>Saccharomycetales</taxon>
        <taxon>Saccharomycetaceae</taxon>
        <taxon>Saccharomyces</taxon>
    </lineage>
</organism>
<sequence>MAAQKSFRIKQKMAKAKKQNRPLPQWIRLRTNNTIRYNAKRRNWRRTKMNI</sequence>
<dbReference type="EMBL" id="X01963">
    <property type="protein sequence ID" value="CAA25999.1"/>
    <property type="molecule type" value="Genomic_DNA"/>
</dbReference>
<dbReference type="EMBL" id="Z49464">
    <property type="protein sequence ID" value="CAA89483.1"/>
    <property type="molecule type" value="Genomic_DNA"/>
</dbReference>
<dbReference type="EMBL" id="BK006943">
    <property type="protein sequence ID" value="DAA08618.1"/>
    <property type="molecule type" value="Genomic_DNA"/>
</dbReference>
<dbReference type="PIR" id="B23082">
    <property type="entry name" value="R6BY46"/>
</dbReference>
<dbReference type="RefSeq" id="NP_012346.1">
    <property type="nucleotide sequence ID" value="NM_001181622.1"/>
</dbReference>
<dbReference type="PDB" id="2WW9">
    <property type="method" value="EM"/>
    <property type="resolution" value="8.60 A"/>
    <property type="chains" value="O=1-51"/>
</dbReference>
<dbReference type="PDB" id="2WWA">
    <property type="method" value="EM"/>
    <property type="resolution" value="8.90 A"/>
    <property type="chains" value="O=1-51"/>
</dbReference>
<dbReference type="PDB" id="2WWB">
    <property type="method" value="EM"/>
    <property type="resolution" value="6.48 A"/>
    <property type="chains" value="O=1-51"/>
</dbReference>
<dbReference type="PDB" id="3J6X">
    <property type="method" value="EM"/>
    <property type="resolution" value="6.10 A"/>
    <property type="chains" value="79=1-51"/>
</dbReference>
<dbReference type="PDB" id="3J6Y">
    <property type="method" value="EM"/>
    <property type="resolution" value="6.10 A"/>
    <property type="chains" value="79=1-51"/>
</dbReference>
<dbReference type="PDB" id="3J77">
    <property type="method" value="EM"/>
    <property type="resolution" value="6.20 A"/>
    <property type="chains" value="89=1-51"/>
</dbReference>
<dbReference type="PDB" id="3J78">
    <property type="method" value="EM"/>
    <property type="resolution" value="6.30 A"/>
    <property type="chains" value="89=1-51"/>
</dbReference>
<dbReference type="PDB" id="3JCT">
    <property type="method" value="EM"/>
    <property type="resolution" value="3.08 A"/>
    <property type="chains" value="l=1-51"/>
</dbReference>
<dbReference type="PDB" id="4U3M">
    <property type="method" value="X-ray"/>
    <property type="resolution" value="3.00 A"/>
    <property type="chains" value="O9/o9=2-51"/>
</dbReference>
<dbReference type="PDB" id="4U3N">
    <property type="method" value="X-ray"/>
    <property type="resolution" value="3.20 A"/>
    <property type="chains" value="O9/o9=2-51"/>
</dbReference>
<dbReference type="PDB" id="4U3U">
    <property type="method" value="X-ray"/>
    <property type="resolution" value="2.90 A"/>
    <property type="chains" value="O9/o9=2-51"/>
</dbReference>
<dbReference type="PDB" id="4U4N">
    <property type="method" value="X-ray"/>
    <property type="resolution" value="3.10 A"/>
    <property type="chains" value="O9/o9=2-51"/>
</dbReference>
<dbReference type="PDB" id="4U4O">
    <property type="method" value="X-ray"/>
    <property type="resolution" value="3.60 A"/>
    <property type="chains" value="O9/o9=2-51"/>
</dbReference>
<dbReference type="PDB" id="4U4Q">
    <property type="method" value="X-ray"/>
    <property type="resolution" value="3.00 A"/>
    <property type="chains" value="O9/o9=2-51"/>
</dbReference>
<dbReference type="PDB" id="4U4R">
    <property type="method" value="X-ray"/>
    <property type="resolution" value="2.80 A"/>
    <property type="chains" value="O9/o9=2-51"/>
</dbReference>
<dbReference type="PDB" id="4U4U">
    <property type="method" value="X-ray"/>
    <property type="resolution" value="3.00 A"/>
    <property type="chains" value="O9/o9=2-51"/>
</dbReference>
<dbReference type="PDB" id="4U4Y">
    <property type="method" value="X-ray"/>
    <property type="resolution" value="3.20 A"/>
    <property type="chains" value="O9/o9=2-51"/>
</dbReference>
<dbReference type="PDB" id="4U4Z">
    <property type="method" value="X-ray"/>
    <property type="resolution" value="3.10 A"/>
    <property type="chains" value="O9/o9=2-51"/>
</dbReference>
<dbReference type="PDB" id="4U50">
    <property type="method" value="X-ray"/>
    <property type="resolution" value="3.20 A"/>
    <property type="chains" value="O9/o9=2-51"/>
</dbReference>
<dbReference type="PDB" id="4U51">
    <property type="method" value="X-ray"/>
    <property type="resolution" value="3.20 A"/>
    <property type="chains" value="O9/o9=2-51"/>
</dbReference>
<dbReference type="PDB" id="4U52">
    <property type="method" value="X-ray"/>
    <property type="resolution" value="3.00 A"/>
    <property type="chains" value="O9/o9=2-51"/>
</dbReference>
<dbReference type="PDB" id="4U53">
    <property type="method" value="X-ray"/>
    <property type="resolution" value="3.30 A"/>
    <property type="chains" value="O9/o9=2-51"/>
</dbReference>
<dbReference type="PDB" id="4U55">
    <property type="method" value="X-ray"/>
    <property type="resolution" value="3.20 A"/>
    <property type="chains" value="O9/o9=2-51"/>
</dbReference>
<dbReference type="PDB" id="4U56">
    <property type="method" value="X-ray"/>
    <property type="resolution" value="3.45 A"/>
    <property type="chains" value="O9/o9=2-51"/>
</dbReference>
<dbReference type="PDB" id="4U6F">
    <property type="method" value="X-ray"/>
    <property type="resolution" value="3.10 A"/>
    <property type="chains" value="O9/o9=2-51"/>
</dbReference>
<dbReference type="PDB" id="4V5Z">
    <property type="method" value="EM"/>
    <property type="resolution" value="8.70 A"/>
    <property type="chains" value="B3=1-51"/>
</dbReference>
<dbReference type="PDB" id="4V6I">
    <property type="method" value="EM"/>
    <property type="resolution" value="8.80 A"/>
    <property type="chains" value="Bo=1-51"/>
</dbReference>
<dbReference type="PDB" id="4V7F">
    <property type="method" value="EM"/>
    <property type="resolution" value="8.70 A"/>
    <property type="chains" value="j=1-51"/>
</dbReference>
<dbReference type="PDB" id="4V7R">
    <property type="method" value="X-ray"/>
    <property type="resolution" value="4.00 A"/>
    <property type="chains" value="Be/De=1-51"/>
</dbReference>
<dbReference type="PDB" id="4V88">
    <property type="method" value="X-ray"/>
    <property type="resolution" value="3.00 A"/>
    <property type="chains" value="Bl/Dl=1-51"/>
</dbReference>
<dbReference type="PDB" id="4V8T">
    <property type="method" value="EM"/>
    <property type="resolution" value="8.10 A"/>
    <property type="chains" value="l=1-51"/>
</dbReference>
<dbReference type="PDB" id="4V8Y">
    <property type="method" value="EM"/>
    <property type="resolution" value="4.30 A"/>
    <property type="chains" value="Bl=2-51"/>
</dbReference>
<dbReference type="PDB" id="4V8Z">
    <property type="method" value="EM"/>
    <property type="resolution" value="6.60 A"/>
    <property type="chains" value="Bl=2-51"/>
</dbReference>
<dbReference type="PDB" id="4V91">
    <property type="method" value="EM"/>
    <property type="resolution" value="3.70 A"/>
    <property type="chains" value="l=1-51"/>
</dbReference>
<dbReference type="PDB" id="5APN">
    <property type="method" value="EM"/>
    <property type="resolution" value="3.91 A"/>
    <property type="chains" value="l=1-51"/>
</dbReference>
<dbReference type="PDB" id="5APO">
    <property type="method" value="EM"/>
    <property type="resolution" value="3.41 A"/>
    <property type="chains" value="l=1-51"/>
</dbReference>
<dbReference type="PDB" id="5DAT">
    <property type="method" value="X-ray"/>
    <property type="resolution" value="3.15 A"/>
    <property type="chains" value="O9/o9=2-51"/>
</dbReference>
<dbReference type="PDB" id="5DC3">
    <property type="method" value="X-ray"/>
    <property type="resolution" value="3.25 A"/>
    <property type="chains" value="O9/o9=2-51"/>
</dbReference>
<dbReference type="PDB" id="5DGE">
    <property type="method" value="X-ray"/>
    <property type="resolution" value="3.45 A"/>
    <property type="chains" value="O9/o9=2-51"/>
</dbReference>
<dbReference type="PDB" id="5DGF">
    <property type="method" value="X-ray"/>
    <property type="resolution" value="3.30 A"/>
    <property type="chains" value="O9/o9=2-51"/>
</dbReference>
<dbReference type="PDB" id="5DGV">
    <property type="method" value="X-ray"/>
    <property type="resolution" value="3.10 A"/>
    <property type="chains" value="O9/o9=2-51"/>
</dbReference>
<dbReference type="PDB" id="5FCI">
    <property type="method" value="X-ray"/>
    <property type="resolution" value="3.40 A"/>
    <property type="chains" value="O9/o9=2-51"/>
</dbReference>
<dbReference type="PDB" id="5FCJ">
    <property type="method" value="X-ray"/>
    <property type="resolution" value="3.10 A"/>
    <property type="chains" value="O9/o9=2-51"/>
</dbReference>
<dbReference type="PDB" id="5GAK">
    <property type="method" value="EM"/>
    <property type="resolution" value="3.88 A"/>
    <property type="chains" value="n=1-51"/>
</dbReference>
<dbReference type="PDB" id="5H4P">
    <property type="method" value="EM"/>
    <property type="resolution" value="3.07 A"/>
    <property type="chains" value="l=1-51"/>
</dbReference>
<dbReference type="PDB" id="5I4L">
    <property type="method" value="X-ray"/>
    <property type="resolution" value="3.10 A"/>
    <property type="chains" value="O9/o9=2-51"/>
</dbReference>
<dbReference type="PDB" id="5IT7">
    <property type="method" value="EM"/>
    <property type="resolution" value="3.60 A"/>
    <property type="chains" value="ll=2-50"/>
</dbReference>
<dbReference type="PDB" id="5JCS">
    <property type="method" value="EM"/>
    <property type="resolution" value="9.50 A"/>
    <property type="chains" value="l=1-51"/>
</dbReference>
<dbReference type="PDB" id="5JUO">
    <property type="method" value="EM"/>
    <property type="resolution" value="4.00 A"/>
    <property type="chains" value="QA=1-51"/>
</dbReference>
<dbReference type="PDB" id="5JUP">
    <property type="method" value="EM"/>
    <property type="resolution" value="3.50 A"/>
    <property type="chains" value="QA=1-51"/>
</dbReference>
<dbReference type="PDB" id="5JUS">
    <property type="method" value="EM"/>
    <property type="resolution" value="4.20 A"/>
    <property type="chains" value="QA=1-51"/>
</dbReference>
<dbReference type="PDB" id="5JUT">
    <property type="method" value="EM"/>
    <property type="resolution" value="4.00 A"/>
    <property type="chains" value="QA=1-51"/>
</dbReference>
<dbReference type="PDB" id="5JUU">
    <property type="method" value="EM"/>
    <property type="resolution" value="4.00 A"/>
    <property type="chains" value="QA=1-51"/>
</dbReference>
<dbReference type="PDB" id="5LYB">
    <property type="method" value="X-ray"/>
    <property type="resolution" value="3.25 A"/>
    <property type="chains" value="O9/o9=2-51"/>
</dbReference>
<dbReference type="PDB" id="5M1J">
    <property type="method" value="EM"/>
    <property type="resolution" value="3.30 A"/>
    <property type="chains" value="l5=2-51"/>
</dbReference>
<dbReference type="PDB" id="5MC6">
    <property type="method" value="EM"/>
    <property type="resolution" value="3.80 A"/>
    <property type="chains" value="AL=1-51"/>
</dbReference>
<dbReference type="PDB" id="5MEI">
    <property type="method" value="X-ray"/>
    <property type="resolution" value="3.50 A"/>
    <property type="chains" value="AM/DN=2-51"/>
</dbReference>
<dbReference type="PDB" id="5NDG">
    <property type="method" value="X-ray"/>
    <property type="resolution" value="3.70 A"/>
    <property type="chains" value="O9/o9=2-51"/>
</dbReference>
<dbReference type="PDB" id="5NDV">
    <property type="method" value="X-ray"/>
    <property type="resolution" value="3.30 A"/>
    <property type="chains" value="O9/o9=2-51"/>
</dbReference>
<dbReference type="PDB" id="5NDW">
    <property type="method" value="X-ray"/>
    <property type="resolution" value="3.70 A"/>
    <property type="chains" value="O9/o9=2-51"/>
</dbReference>
<dbReference type="PDB" id="5OBM">
    <property type="method" value="X-ray"/>
    <property type="resolution" value="3.40 A"/>
    <property type="chains" value="O9/o9=2-51"/>
</dbReference>
<dbReference type="PDB" id="5ON6">
    <property type="method" value="X-ray"/>
    <property type="resolution" value="3.10 A"/>
    <property type="chains" value="AM/DN=2-51"/>
</dbReference>
<dbReference type="PDB" id="5T62">
    <property type="method" value="EM"/>
    <property type="resolution" value="3.30 A"/>
    <property type="chains" value="y=1-51"/>
</dbReference>
<dbReference type="PDB" id="5T6R">
    <property type="method" value="EM"/>
    <property type="resolution" value="4.50 A"/>
    <property type="chains" value="y=1-51"/>
</dbReference>
<dbReference type="PDB" id="5TBW">
    <property type="method" value="X-ray"/>
    <property type="resolution" value="3.00 A"/>
    <property type="chains" value="AM/DN=2-51"/>
</dbReference>
<dbReference type="PDB" id="5TGA">
    <property type="method" value="X-ray"/>
    <property type="resolution" value="3.30 A"/>
    <property type="chains" value="O9/o9=2-51"/>
</dbReference>
<dbReference type="PDB" id="5TGM">
    <property type="method" value="X-ray"/>
    <property type="resolution" value="3.50 A"/>
    <property type="chains" value="O9/o9=2-51"/>
</dbReference>
<dbReference type="PDB" id="6FT6">
    <property type="method" value="EM"/>
    <property type="resolution" value="3.90 A"/>
    <property type="chains" value="l=1-51"/>
</dbReference>
<dbReference type="PDB" id="6GQ1">
    <property type="method" value="EM"/>
    <property type="resolution" value="4.40 A"/>
    <property type="chains" value="l=2-51"/>
</dbReference>
<dbReference type="PDB" id="6GQB">
    <property type="method" value="EM"/>
    <property type="resolution" value="3.90 A"/>
    <property type="chains" value="l=2-51"/>
</dbReference>
<dbReference type="PDB" id="6GQV">
    <property type="method" value="EM"/>
    <property type="resolution" value="4.00 A"/>
    <property type="chains" value="l=2-51"/>
</dbReference>
<dbReference type="PDB" id="6HD7">
    <property type="method" value="EM"/>
    <property type="resolution" value="3.40 A"/>
    <property type="chains" value="n=1-51"/>
</dbReference>
<dbReference type="PDB" id="6HHQ">
    <property type="method" value="X-ray"/>
    <property type="resolution" value="3.10 A"/>
    <property type="chains" value="AM/DN=1-51"/>
</dbReference>
<dbReference type="PDB" id="6I7O">
    <property type="method" value="EM"/>
    <property type="resolution" value="5.30 A"/>
    <property type="chains" value="AL/XL=2-51"/>
</dbReference>
<dbReference type="PDB" id="6M62">
    <property type="method" value="EM"/>
    <property type="resolution" value="3.20 A"/>
    <property type="chains" value="l=1-51"/>
</dbReference>
<dbReference type="PDB" id="6N8J">
    <property type="method" value="EM"/>
    <property type="resolution" value="3.50 A"/>
    <property type="chains" value="l=1-51"/>
</dbReference>
<dbReference type="PDB" id="6N8K">
    <property type="method" value="EM"/>
    <property type="resolution" value="3.60 A"/>
    <property type="chains" value="l=1-51"/>
</dbReference>
<dbReference type="PDB" id="6N8L">
    <property type="method" value="EM"/>
    <property type="resolution" value="3.60 A"/>
    <property type="chains" value="l=1-51"/>
</dbReference>
<dbReference type="PDB" id="6N8M">
    <property type="method" value="EM"/>
    <property type="resolution" value="3.50 A"/>
    <property type="chains" value="y=1-51"/>
</dbReference>
<dbReference type="PDB" id="6N8N">
    <property type="method" value="EM"/>
    <property type="resolution" value="3.80 A"/>
    <property type="chains" value="y=1-51"/>
</dbReference>
<dbReference type="PDB" id="6N8O">
    <property type="method" value="EM"/>
    <property type="resolution" value="3.50 A"/>
    <property type="chains" value="y=1-51"/>
</dbReference>
<dbReference type="PDB" id="6OIG">
    <property type="method" value="EM"/>
    <property type="resolution" value="3.80 A"/>
    <property type="chains" value="l=2-51"/>
</dbReference>
<dbReference type="PDB" id="6Q8Y">
    <property type="method" value="EM"/>
    <property type="resolution" value="3.10 A"/>
    <property type="chains" value="AL=2-51"/>
</dbReference>
<dbReference type="PDB" id="6QIK">
    <property type="method" value="EM"/>
    <property type="resolution" value="3.10 A"/>
    <property type="chains" value="k=1-51"/>
</dbReference>
<dbReference type="PDB" id="6QT0">
    <property type="method" value="EM"/>
    <property type="resolution" value="3.40 A"/>
    <property type="chains" value="k=1-51"/>
</dbReference>
<dbReference type="PDB" id="6QTZ">
    <property type="method" value="EM"/>
    <property type="resolution" value="3.50 A"/>
    <property type="chains" value="k=1-51"/>
</dbReference>
<dbReference type="PDB" id="6R84">
    <property type="method" value="EM"/>
    <property type="resolution" value="3.60 A"/>
    <property type="chains" value="n=2-51"/>
</dbReference>
<dbReference type="PDB" id="6R86">
    <property type="method" value="EM"/>
    <property type="resolution" value="3.40 A"/>
    <property type="chains" value="n=2-51"/>
</dbReference>
<dbReference type="PDB" id="6R87">
    <property type="method" value="EM"/>
    <property type="resolution" value="3.40 A"/>
    <property type="chains" value="n=2-51"/>
</dbReference>
<dbReference type="PDB" id="6RI5">
    <property type="method" value="EM"/>
    <property type="resolution" value="3.30 A"/>
    <property type="chains" value="k=1-51"/>
</dbReference>
<dbReference type="PDB" id="6RZZ">
    <property type="method" value="EM"/>
    <property type="resolution" value="3.20 A"/>
    <property type="chains" value="k=1-51"/>
</dbReference>
<dbReference type="PDB" id="6S05">
    <property type="method" value="EM"/>
    <property type="resolution" value="3.90 A"/>
    <property type="chains" value="k=1-51"/>
</dbReference>
<dbReference type="PDB" id="6S47">
    <property type="method" value="EM"/>
    <property type="resolution" value="3.28 A"/>
    <property type="chains" value="An=2-51"/>
</dbReference>
<dbReference type="PDB" id="6SNT">
    <property type="method" value="EM"/>
    <property type="resolution" value="2.80 A"/>
    <property type="chains" value="ae=1-51"/>
</dbReference>
<dbReference type="PDB" id="6SV4">
    <property type="method" value="EM"/>
    <property type="resolution" value="3.30 A"/>
    <property type="chains" value="AL/XL/zL=1-51"/>
</dbReference>
<dbReference type="PDB" id="6T4Q">
    <property type="method" value="EM"/>
    <property type="resolution" value="2.60 A"/>
    <property type="chains" value="Ll=2-51"/>
</dbReference>
<dbReference type="PDB" id="6T7I">
    <property type="method" value="EM"/>
    <property type="resolution" value="3.20 A"/>
    <property type="chains" value="Ll=1-51"/>
</dbReference>
<dbReference type="PDB" id="6T7T">
    <property type="method" value="EM"/>
    <property type="resolution" value="3.10 A"/>
    <property type="chains" value="Ll=1-51"/>
</dbReference>
<dbReference type="PDB" id="6T83">
    <property type="method" value="EM"/>
    <property type="resolution" value="4.00 A"/>
    <property type="chains" value="W/lb=1-51"/>
</dbReference>
<dbReference type="PDB" id="6TB3">
    <property type="method" value="EM"/>
    <property type="resolution" value="2.80 A"/>
    <property type="chains" value="AL=2-51"/>
</dbReference>
<dbReference type="PDB" id="6TNU">
    <property type="method" value="EM"/>
    <property type="resolution" value="3.10 A"/>
    <property type="chains" value="AL=2-51"/>
</dbReference>
<dbReference type="PDB" id="6WOO">
    <property type="method" value="EM"/>
    <property type="resolution" value="2.90 A"/>
    <property type="chains" value="l=2-50"/>
</dbReference>
<dbReference type="PDB" id="6XIQ">
    <property type="method" value="EM"/>
    <property type="resolution" value="4.20 A"/>
    <property type="chains" value="l=1-51"/>
</dbReference>
<dbReference type="PDB" id="6XIR">
    <property type="method" value="EM"/>
    <property type="resolution" value="3.20 A"/>
    <property type="chains" value="l=1-51"/>
</dbReference>
<dbReference type="PDB" id="6YLG">
    <property type="method" value="EM"/>
    <property type="resolution" value="3.00 A"/>
    <property type="chains" value="l=1-51"/>
</dbReference>
<dbReference type="PDB" id="6YLH">
    <property type="method" value="EM"/>
    <property type="resolution" value="3.10 A"/>
    <property type="chains" value="l=1-51"/>
</dbReference>
<dbReference type="PDB" id="6YLX">
    <property type="method" value="EM"/>
    <property type="resolution" value="3.90 A"/>
    <property type="chains" value="l=1-51"/>
</dbReference>
<dbReference type="PDB" id="6YLY">
    <property type="method" value="EM"/>
    <property type="resolution" value="3.80 A"/>
    <property type="chains" value="l=1-51"/>
</dbReference>
<dbReference type="PDB" id="6Z6J">
    <property type="method" value="EM"/>
    <property type="resolution" value="3.40 A"/>
    <property type="chains" value="Ll=1-51"/>
</dbReference>
<dbReference type="PDB" id="6Z6K">
    <property type="method" value="EM"/>
    <property type="resolution" value="3.40 A"/>
    <property type="chains" value="Ll=1-51"/>
</dbReference>
<dbReference type="PDB" id="7AZY">
    <property type="method" value="EM"/>
    <property type="resolution" value="2.88 A"/>
    <property type="chains" value="M=1-51"/>
</dbReference>
<dbReference type="PDB" id="7B7D">
    <property type="method" value="EM"/>
    <property type="resolution" value="3.30 A"/>
    <property type="chains" value="Lh=2-51"/>
</dbReference>
<dbReference type="PDB" id="7MPI">
    <property type="method" value="EM"/>
    <property type="resolution" value="3.05 A"/>
    <property type="chains" value="Al=2-51"/>
</dbReference>
<dbReference type="PDB" id="7MPJ">
    <property type="method" value="EM"/>
    <property type="resolution" value="2.70 A"/>
    <property type="chains" value="Al=2-51"/>
</dbReference>
<dbReference type="PDB" id="7N8B">
    <property type="method" value="EM"/>
    <property type="resolution" value="3.05 A"/>
    <property type="chains" value="Al=2-51"/>
</dbReference>
<dbReference type="PDB" id="7NRC">
    <property type="method" value="EM"/>
    <property type="resolution" value="3.90 A"/>
    <property type="chains" value="Ln=2-51"/>
</dbReference>
<dbReference type="PDB" id="7NRD">
    <property type="method" value="EM"/>
    <property type="resolution" value="4.36 A"/>
    <property type="chains" value="Ln=2-51"/>
</dbReference>
<dbReference type="PDB" id="7OF1">
    <property type="method" value="EM"/>
    <property type="resolution" value="3.10 A"/>
    <property type="chains" value="l=1-51"/>
</dbReference>
<dbReference type="PDB" id="7OH3">
    <property type="method" value="EM"/>
    <property type="resolution" value="3.40 A"/>
    <property type="chains" value="l=1-51"/>
</dbReference>
<dbReference type="PDB" id="7OHQ">
    <property type="method" value="EM"/>
    <property type="resolution" value="3.10 A"/>
    <property type="chains" value="l=1-51"/>
</dbReference>
<dbReference type="PDB" id="7TOO">
    <property type="method" value="EM"/>
    <property type="resolution" value="2.70 A"/>
    <property type="chains" value="AL39=1-51"/>
</dbReference>
<dbReference type="PDB" id="7TOP">
    <property type="method" value="EM"/>
    <property type="resolution" value="2.40 A"/>
    <property type="chains" value="AL39=1-51"/>
</dbReference>
<dbReference type="PDB" id="7UG6">
    <property type="method" value="EM"/>
    <property type="resolution" value="2.90 A"/>
    <property type="chains" value="l=1-51"/>
</dbReference>
<dbReference type="PDB" id="7UOO">
    <property type="method" value="EM"/>
    <property type="resolution" value="2.34 A"/>
    <property type="chains" value="l=1-51"/>
</dbReference>
<dbReference type="PDB" id="7UQB">
    <property type="method" value="EM"/>
    <property type="resolution" value="2.43 A"/>
    <property type="chains" value="l=1-51"/>
</dbReference>
<dbReference type="PDB" id="7UQZ">
    <property type="method" value="EM"/>
    <property type="resolution" value="2.44 A"/>
    <property type="chains" value="l=2-51"/>
</dbReference>
<dbReference type="PDB" id="7V08">
    <property type="method" value="EM"/>
    <property type="resolution" value="2.36 A"/>
    <property type="chains" value="l=1-51"/>
</dbReference>
<dbReference type="PDB" id="7Z34">
    <property type="method" value="EM"/>
    <property type="resolution" value="3.80 A"/>
    <property type="chains" value="l=1-51"/>
</dbReference>
<dbReference type="PDB" id="7ZPQ">
    <property type="method" value="EM"/>
    <property type="resolution" value="3.47 A"/>
    <property type="chains" value="Bk=2-51"/>
</dbReference>
<dbReference type="PDB" id="7ZRS">
    <property type="method" value="EM"/>
    <property type="resolution" value="4.80 A"/>
    <property type="chains" value="Bk=2-51"/>
</dbReference>
<dbReference type="PDB" id="7ZS5">
    <property type="method" value="EM"/>
    <property type="resolution" value="3.20 A"/>
    <property type="chains" value="Bm=2-51"/>
</dbReference>
<dbReference type="PDB" id="7ZUW">
    <property type="method" value="EM"/>
    <property type="resolution" value="4.30 A"/>
    <property type="chains" value="Bk=2-51"/>
</dbReference>
<dbReference type="PDB" id="7ZUX">
    <property type="method" value="EM"/>
    <property type="resolution" value="2.50 A"/>
    <property type="chains" value="Ek=2-51"/>
</dbReference>
<dbReference type="PDB" id="7ZW0">
    <property type="method" value="EM"/>
    <property type="resolution" value="2.40 A"/>
    <property type="chains" value="Lo=1-51"/>
</dbReference>
<dbReference type="PDB" id="8AAF">
    <property type="method" value="EM"/>
    <property type="resolution" value="2.50 A"/>
    <property type="chains" value="Y=1-51"/>
</dbReference>
<dbReference type="PDB" id="8AGT">
    <property type="method" value="EM"/>
    <property type="resolution" value="2.60 A"/>
    <property type="chains" value="Y=1-51"/>
</dbReference>
<dbReference type="PDB" id="8AGU">
    <property type="method" value="EM"/>
    <property type="resolution" value="2.70 A"/>
    <property type="chains" value="Y=1-51"/>
</dbReference>
<dbReference type="PDB" id="8AGV">
    <property type="method" value="EM"/>
    <property type="resolution" value="2.60 A"/>
    <property type="chains" value="Y=1-51"/>
</dbReference>
<dbReference type="PDB" id="8AGW">
    <property type="method" value="EM"/>
    <property type="resolution" value="2.60 A"/>
    <property type="chains" value="Y=1-51"/>
</dbReference>
<dbReference type="PDB" id="8AGX">
    <property type="method" value="EM"/>
    <property type="resolution" value="2.40 A"/>
    <property type="chains" value="Y=1-51"/>
</dbReference>
<dbReference type="PDB" id="8AGZ">
    <property type="method" value="EM"/>
    <property type="resolution" value="2.60 A"/>
    <property type="chains" value="Y=1-51"/>
</dbReference>
<dbReference type="PDB" id="8BIP">
    <property type="method" value="EM"/>
    <property type="resolution" value="3.10 A"/>
    <property type="chains" value="Ll=2-51"/>
</dbReference>
<dbReference type="PDB" id="8BJQ">
    <property type="method" value="EM"/>
    <property type="resolution" value="3.80 A"/>
    <property type="chains" value="Ll=2-51"/>
</dbReference>
<dbReference type="PDB" id="8BN3">
    <property type="method" value="EM"/>
    <property type="resolution" value="2.40 A"/>
    <property type="chains" value="O9=2-51"/>
</dbReference>
<dbReference type="PDB" id="8BQD">
    <property type="method" value="EM"/>
    <property type="resolution" value="3.90 A"/>
    <property type="chains" value="AL=2-51"/>
</dbReference>
<dbReference type="PDB" id="8BQX">
    <property type="method" value="EM"/>
    <property type="resolution" value="3.80 A"/>
    <property type="chains" value="AL=2-51"/>
</dbReference>
<dbReference type="PDB" id="8CCS">
    <property type="method" value="EM"/>
    <property type="resolution" value="1.97 A"/>
    <property type="chains" value="X=1-51"/>
</dbReference>
<dbReference type="PDB" id="8CDL">
    <property type="method" value="EM"/>
    <property type="resolution" value="2.72 A"/>
    <property type="chains" value="X=1-51"/>
</dbReference>
<dbReference type="PDB" id="8CDR">
    <property type="method" value="EM"/>
    <property type="resolution" value="2.04 A"/>
    <property type="chains" value="X=1-51"/>
</dbReference>
<dbReference type="PDB" id="8CEH">
    <property type="method" value="EM"/>
    <property type="resolution" value="2.05 A"/>
    <property type="chains" value="X=1-51"/>
</dbReference>
<dbReference type="PDB" id="8CF5">
    <property type="method" value="EM"/>
    <property type="resolution" value="2.71 A"/>
    <property type="chains" value="X=1-51"/>
</dbReference>
<dbReference type="PDB" id="8CG8">
    <property type="method" value="EM"/>
    <property type="resolution" value="2.57 A"/>
    <property type="chains" value="X=1-51"/>
</dbReference>
<dbReference type="PDB" id="8CGN">
    <property type="method" value="EM"/>
    <property type="resolution" value="2.28 A"/>
    <property type="chains" value="X=1-51"/>
</dbReference>
<dbReference type="PDB" id="8CIV">
    <property type="method" value="EM"/>
    <property type="resolution" value="2.47 A"/>
    <property type="chains" value="X=1-51"/>
</dbReference>
<dbReference type="PDB" id="8CKU">
    <property type="method" value="EM"/>
    <property type="resolution" value="3.11 A"/>
    <property type="chains" value="X=1-51"/>
</dbReference>
<dbReference type="PDB" id="8CMJ">
    <property type="method" value="EM"/>
    <property type="resolution" value="3.79 A"/>
    <property type="chains" value="X=1-51"/>
</dbReference>
<dbReference type="PDB" id="8EUB">
    <property type="method" value="EM"/>
    <property type="resolution" value="2.52 A"/>
    <property type="chains" value="Al=1-51"/>
</dbReference>
<dbReference type="PDB" id="8EVP">
    <property type="method" value="EM"/>
    <property type="resolution" value="2.38 A"/>
    <property type="chains" value="Al=1-51"/>
</dbReference>
<dbReference type="PDB" id="8EVQ">
    <property type="method" value="EM"/>
    <property type="resolution" value="2.72 A"/>
    <property type="chains" value="Al=1-51"/>
</dbReference>
<dbReference type="PDB" id="8EVR">
    <property type="method" value="EM"/>
    <property type="resolution" value="2.87 A"/>
    <property type="chains" value="Al=1-51"/>
</dbReference>
<dbReference type="PDB" id="8EVS">
    <property type="method" value="EM"/>
    <property type="resolution" value="2.62 A"/>
    <property type="chains" value="Al=1-51"/>
</dbReference>
<dbReference type="PDB" id="8EVT">
    <property type="method" value="EM"/>
    <property type="resolution" value="2.20 A"/>
    <property type="chains" value="Al=1-51"/>
</dbReference>
<dbReference type="PDB" id="8EWB">
    <property type="method" value="EM"/>
    <property type="resolution" value="2.87 A"/>
    <property type="chains" value="Al=1-51"/>
</dbReference>
<dbReference type="PDB" id="8EWC">
    <property type="method" value="EM"/>
    <property type="resolution" value="2.45 A"/>
    <property type="chains" value="Al=1-51"/>
</dbReference>
<dbReference type="PDB" id="8HFR">
    <property type="method" value="EM"/>
    <property type="resolution" value="2.64 A"/>
    <property type="chains" value="li=1-51"/>
</dbReference>
<dbReference type="PDB" id="8K2D">
    <property type="method" value="EM"/>
    <property type="resolution" value="3.20 A"/>
    <property type="chains" value="Ll=1-51"/>
</dbReference>
<dbReference type="PDB" id="8K82">
    <property type="method" value="EM"/>
    <property type="resolution" value="3.00 A"/>
    <property type="chains" value="Ll=1-51"/>
</dbReference>
<dbReference type="PDB" id="8P4V">
    <property type="method" value="X-ray"/>
    <property type="resolution" value="3.16 A"/>
    <property type="chains" value="AM/DN=1-51"/>
</dbReference>
<dbReference type="PDB" id="8P8U">
    <property type="method" value="EM"/>
    <property type="resolution" value="2.23 A"/>
    <property type="chains" value="2=1-51"/>
</dbReference>
<dbReference type="PDB" id="8P9A">
    <property type="method" value="X-ray"/>
    <property type="resolution" value="2.90 A"/>
    <property type="chains" value="AM/DN=1-51"/>
</dbReference>
<dbReference type="PDB" id="8T2X">
    <property type="method" value="EM"/>
    <property type="resolution" value="2.46 A"/>
    <property type="chains" value="Al=1-51"/>
</dbReference>
<dbReference type="PDB" id="8T2Y">
    <property type="method" value="EM"/>
    <property type="resolution" value="2.20 A"/>
    <property type="chains" value="Al=1-51"/>
</dbReference>
<dbReference type="PDB" id="8T2Z">
    <property type="method" value="EM"/>
    <property type="resolution" value="2.40 A"/>
    <property type="chains" value="Al=1-51"/>
</dbReference>
<dbReference type="PDB" id="8T30">
    <property type="method" value="EM"/>
    <property type="resolution" value="2.88 A"/>
    <property type="chains" value="Al=1-51"/>
</dbReference>
<dbReference type="PDB" id="8T3A">
    <property type="method" value="EM"/>
    <property type="resolution" value="2.86 A"/>
    <property type="chains" value="Al=1-51"/>
</dbReference>
<dbReference type="PDB" id="8T3B">
    <property type="method" value="EM"/>
    <property type="resolution" value="3.08 A"/>
    <property type="chains" value="Al=1-51"/>
</dbReference>
<dbReference type="PDB" id="8T3C">
    <property type="method" value="EM"/>
    <property type="resolution" value="3.86 A"/>
    <property type="chains" value="Al=1-51"/>
</dbReference>
<dbReference type="PDB" id="8T3D">
    <property type="method" value="EM"/>
    <property type="resolution" value="2.95 A"/>
    <property type="chains" value="Al=1-51"/>
</dbReference>
<dbReference type="PDB" id="8T3E">
    <property type="method" value="EM"/>
    <property type="resolution" value="3.04 A"/>
    <property type="chains" value="Al=1-51"/>
</dbReference>
<dbReference type="PDB" id="8T3F">
    <property type="method" value="EM"/>
    <property type="resolution" value="3.09 A"/>
    <property type="chains" value="Al=1-51"/>
</dbReference>
<dbReference type="PDB" id="8UT0">
    <property type="method" value="EM"/>
    <property type="resolution" value="3.22 A"/>
    <property type="chains" value="Ln=2-51"/>
</dbReference>
<dbReference type="PDB" id="8UTI">
    <property type="method" value="EM"/>
    <property type="resolution" value="3.13 A"/>
    <property type="chains" value="Ln=2-51"/>
</dbReference>
<dbReference type="PDB" id="8XU8">
    <property type="method" value="EM"/>
    <property type="resolution" value="3.40 A"/>
    <property type="chains" value="n=2-51"/>
</dbReference>
<dbReference type="PDB" id="8Y0U">
    <property type="method" value="EM"/>
    <property type="resolution" value="3.59 A"/>
    <property type="chains" value="Ll=2-51"/>
</dbReference>
<dbReference type="PDB" id="8YLD">
    <property type="method" value="EM"/>
    <property type="resolution" value="3.90 A"/>
    <property type="chains" value="n=2-51"/>
</dbReference>
<dbReference type="PDB" id="8YLR">
    <property type="method" value="EM"/>
    <property type="resolution" value="3.90 A"/>
    <property type="chains" value="n=2-51"/>
</dbReference>
<dbReference type="PDB" id="8Z70">
    <property type="method" value="EM"/>
    <property type="resolution" value="3.20 A"/>
    <property type="chains" value="n=2-51"/>
</dbReference>
<dbReference type="PDB" id="8Z71">
    <property type="method" value="EM"/>
    <property type="resolution" value="3.60 A"/>
    <property type="chains" value="n=2-51"/>
</dbReference>
<dbReference type="PDB" id="9F9S">
    <property type="method" value="EM"/>
    <property type="resolution" value="2.90 A"/>
    <property type="chains" value="Lf/Mf=1-51"/>
</dbReference>
<dbReference type="PDBsum" id="2WW9"/>
<dbReference type="PDBsum" id="2WWA"/>
<dbReference type="PDBsum" id="2WWB"/>
<dbReference type="PDBsum" id="3J6X"/>
<dbReference type="PDBsum" id="3J6Y"/>
<dbReference type="PDBsum" id="3J77"/>
<dbReference type="PDBsum" id="3J78"/>
<dbReference type="PDBsum" id="3JCT"/>
<dbReference type="PDBsum" id="4U3M"/>
<dbReference type="PDBsum" id="4U3N"/>
<dbReference type="PDBsum" id="4U3U"/>
<dbReference type="PDBsum" id="4U4N"/>
<dbReference type="PDBsum" id="4U4O"/>
<dbReference type="PDBsum" id="4U4Q"/>
<dbReference type="PDBsum" id="4U4R"/>
<dbReference type="PDBsum" id="4U4U"/>
<dbReference type="PDBsum" id="4U4Y"/>
<dbReference type="PDBsum" id="4U4Z"/>
<dbReference type="PDBsum" id="4U50"/>
<dbReference type="PDBsum" id="4U51"/>
<dbReference type="PDBsum" id="4U52"/>
<dbReference type="PDBsum" id="4U53"/>
<dbReference type="PDBsum" id="4U55"/>
<dbReference type="PDBsum" id="4U56"/>
<dbReference type="PDBsum" id="4U6F"/>
<dbReference type="PDBsum" id="4V5Z"/>
<dbReference type="PDBsum" id="4V6I"/>
<dbReference type="PDBsum" id="4V7F"/>
<dbReference type="PDBsum" id="4V7R"/>
<dbReference type="PDBsum" id="4V88"/>
<dbReference type="PDBsum" id="4V8T"/>
<dbReference type="PDBsum" id="4V8Y"/>
<dbReference type="PDBsum" id="4V8Z"/>
<dbReference type="PDBsum" id="4V91"/>
<dbReference type="PDBsum" id="5APN"/>
<dbReference type="PDBsum" id="5APO"/>
<dbReference type="PDBsum" id="5DAT"/>
<dbReference type="PDBsum" id="5DC3"/>
<dbReference type="PDBsum" id="5DGE"/>
<dbReference type="PDBsum" id="5DGF"/>
<dbReference type="PDBsum" id="5DGV"/>
<dbReference type="PDBsum" id="5FCI"/>
<dbReference type="PDBsum" id="5FCJ"/>
<dbReference type="PDBsum" id="5GAK"/>
<dbReference type="PDBsum" id="5H4P"/>
<dbReference type="PDBsum" id="5I4L"/>
<dbReference type="PDBsum" id="5IT7"/>
<dbReference type="PDBsum" id="5JCS"/>
<dbReference type="PDBsum" id="5JUO"/>
<dbReference type="PDBsum" id="5JUP"/>
<dbReference type="PDBsum" id="5JUS"/>
<dbReference type="PDBsum" id="5JUT"/>
<dbReference type="PDBsum" id="5JUU"/>
<dbReference type="PDBsum" id="5LYB"/>
<dbReference type="PDBsum" id="5M1J"/>
<dbReference type="PDBsum" id="5MC6"/>
<dbReference type="PDBsum" id="5MEI"/>
<dbReference type="PDBsum" id="5NDG"/>
<dbReference type="PDBsum" id="5NDV"/>
<dbReference type="PDBsum" id="5NDW"/>
<dbReference type="PDBsum" id="5OBM"/>
<dbReference type="PDBsum" id="5ON6"/>
<dbReference type="PDBsum" id="5T62"/>
<dbReference type="PDBsum" id="5T6R"/>
<dbReference type="PDBsum" id="5TBW"/>
<dbReference type="PDBsum" id="5TGA"/>
<dbReference type="PDBsum" id="5TGM"/>
<dbReference type="PDBsum" id="6FT6"/>
<dbReference type="PDBsum" id="6GQ1"/>
<dbReference type="PDBsum" id="6GQB"/>
<dbReference type="PDBsum" id="6GQV"/>
<dbReference type="PDBsum" id="6HD7"/>
<dbReference type="PDBsum" id="6HHQ"/>
<dbReference type="PDBsum" id="6I7O"/>
<dbReference type="PDBsum" id="6M62"/>
<dbReference type="PDBsum" id="6N8J"/>
<dbReference type="PDBsum" id="6N8K"/>
<dbReference type="PDBsum" id="6N8L"/>
<dbReference type="PDBsum" id="6N8M"/>
<dbReference type="PDBsum" id="6N8N"/>
<dbReference type="PDBsum" id="6N8O"/>
<dbReference type="PDBsum" id="6OIG"/>
<dbReference type="PDBsum" id="6Q8Y"/>
<dbReference type="PDBsum" id="6QIK"/>
<dbReference type="PDBsum" id="6QT0"/>
<dbReference type="PDBsum" id="6QTZ"/>
<dbReference type="PDBsum" id="6R84"/>
<dbReference type="PDBsum" id="6R86"/>
<dbReference type="PDBsum" id="6R87"/>
<dbReference type="PDBsum" id="6RI5"/>
<dbReference type="PDBsum" id="6RZZ"/>
<dbReference type="PDBsum" id="6S05"/>
<dbReference type="PDBsum" id="6S47"/>
<dbReference type="PDBsum" id="6SNT"/>
<dbReference type="PDBsum" id="6SV4"/>
<dbReference type="PDBsum" id="6T4Q"/>
<dbReference type="PDBsum" id="6T7I"/>
<dbReference type="PDBsum" id="6T7T"/>
<dbReference type="PDBsum" id="6T83"/>
<dbReference type="PDBsum" id="6TB3"/>
<dbReference type="PDBsum" id="6TNU"/>
<dbReference type="PDBsum" id="6WOO"/>
<dbReference type="PDBsum" id="6XIQ"/>
<dbReference type="PDBsum" id="6XIR"/>
<dbReference type="PDBsum" id="6YLG"/>
<dbReference type="PDBsum" id="6YLH"/>
<dbReference type="PDBsum" id="6YLX"/>
<dbReference type="PDBsum" id="6YLY"/>
<dbReference type="PDBsum" id="6Z6J"/>
<dbReference type="PDBsum" id="6Z6K"/>
<dbReference type="PDBsum" id="7AZY"/>
<dbReference type="PDBsum" id="7B7D"/>
<dbReference type="PDBsum" id="7MPI"/>
<dbReference type="PDBsum" id="7MPJ"/>
<dbReference type="PDBsum" id="7N8B"/>
<dbReference type="PDBsum" id="7NRC"/>
<dbReference type="PDBsum" id="7NRD"/>
<dbReference type="PDBsum" id="7OF1"/>
<dbReference type="PDBsum" id="7OH3"/>
<dbReference type="PDBsum" id="7OHQ"/>
<dbReference type="PDBsum" id="7TOO"/>
<dbReference type="PDBsum" id="7TOP"/>
<dbReference type="PDBsum" id="7UG6"/>
<dbReference type="PDBsum" id="7UOO"/>
<dbReference type="PDBsum" id="7UQB"/>
<dbReference type="PDBsum" id="7UQZ"/>
<dbReference type="PDBsum" id="7V08"/>
<dbReference type="PDBsum" id="7Z34"/>
<dbReference type="PDBsum" id="7ZPQ"/>
<dbReference type="PDBsum" id="7ZRS"/>
<dbReference type="PDBsum" id="7ZS5"/>
<dbReference type="PDBsum" id="7ZUW"/>
<dbReference type="PDBsum" id="7ZUX"/>
<dbReference type="PDBsum" id="7ZW0"/>
<dbReference type="PDBsum" id="8AAF"/>
<dbReference type="PDBsum" id="8AGT"/>
<dbReference type="PDBsum" id="8AGU"/>
<dbReference type="PDBsum" id="8AGV"/>
<dbReference type="PDBsum" id="8AGW"/>
<dbReference type="PDBsum" id="8AGX"/>
<dbReference type="PDBsum" id="8AGZ"/>
<dbReference type="PDBsum" id="8BIP"/>
<dbReference type="PDBsum" id="8BJQ"/>
<dbReference type="PDBsum" id="8BN3"/>
<dbReference type="PDBsum" id="8BQD"/>
<dbReference type="PDBsum" id="8BQX"/>
<dbReference type="PDBsum" id="8CCS"/>
<dbReference type="PDBsum" id="8CDL"/>
<dbReference type="PDBsum" id="8CDR"/>
<dbReference type="PDBsum" id="8CEH"/>
<dbReference type="PDBsum" id="8CF5"/>
<dbReference type="PDBsum" id="8CG8"/>
<dbReference type="PDBsum" id="8CGN"/>
<dbReference type="PDBsum" id="8CIV"/>
<dbReference type="PDBsum" id="8CKU"/>
<dbReference type="PDBsum" id="8CMJ"/>
<dbReference type="PDBsum" id="8EUB"/>
<dbReference type="PDBsum" id="8EVP"/>
<dbReference type="PDBsum" id="8EVQ"/>
<dbReference type="PDBsum" id="8EVR"/>
<dbReference type="PDBsum" id="8EVS"/>
<dbReference type="PDBsum" id="8EVT"/>
<dbReference type="PDBsum" id="8EWB"/>
<dbReference type="PDBsum" id="8EWC"/>
<dbReference type="PDBsum" id="8HFR"/>
<dbReference type="PDBsum" id="8K2D"/>
<dbReference type="PDBsum" id="8K82"/>
<dbReference type="PDBsum" id="8P4V"/>
<dbReference type="PDBsum" id="8P8U"/>
<dbReference type="PDBsum" id="8P9A"/>
<dbReference type="PDBsum" id="8T2X"/>
<dbReference type="PDBsum" id="8T2Y"/>
<dbReference type="PDBsum" id="8T2Z"/>
<dbReference type="PDBsum" id="8T30"/>
<dbReference type="PDBsum" id="8T3A"/>
<dbReference type="PDBsum" id="8T3B"/>
<dbReference type="PDBsum" id="8T3C"/>
<dbReference type="PDBsum" id="8T3D"/>
<dbReference type="PDBsum" id="8T3E"/>
<dbReference type="PDBsum" id="8T3F"/>
<dbReference type="PDBsum" id="8UT0"/>
<dbReference type="PDBsum" id="8UTI"/>
<dbReference type="PDBsum" id="8XU8"/>
<dbReference type="PDBsum" id="8Y0U"/>
<dbReference type="PDBsum" id="8YLD"/>
<dbReference type="PDBsum" id="8YLR"/>
<dbReference type="PDBsum" id="8Z70"/>
<dbReference type="PDBsum" id="8Z71"/>
<dbReference type="PDBsum" id="9F9S"/>
<dbReference type="EMDB" id="EMD-0369"/>
<dbReference type="EMDB" id="EMD-0370"/>
<dbReference type="EMDB" id="EMD-0371"/>
<dbReference type="EMDB" id="EMD-0372"/>
<dbReference type="EMDB" id="EMD-0373"/>
<dbReference type="EMDB" id="EMD-10068"/>
<dbReference type="EMDB" id="EMD-10071"/>
<dbReference type="EMDB" id="EMD-10315"/>
<dbReference type="EMDB" id="EMD-10377"/>
<dbReference type="EMDB" id="EMD-10396"/>
<dbReference type="EMDB" id="EMD-10397"/>
<dbReference type="EMDB" id="EMD-10398"/>
<dbReference type="EMDB" id="EMD-10431"/>
<dbReference type="EMDB" id="EMD-10537"/>
<dbReference type="EMDB" id="EMD-10841"/>
<dbReference type="EMDB" id="EMD-10842"/>
<dbReference type="EMDB" id="EMD-11096"/>
<dbReference type="EMDB" id="EMD-11097"/>
<dbReference type="EMDB" id="EMD-11951"/>
<dbReference type="EMDB" id="EMD-12866"/>
<dbReference type="EMDB" id="EMD-12892"/>
<dbReference type="EMDB" id="EMD-12905"/>
<dbReference type="EMDB" id="EMD-14471"/>
<dbReference type="EMDB" id="EMD-14861"/>
<dbReference type="EMDB" id="EMD-14921"/>
<dbReference type="EMDB" id="EMD-14926"/>
<dbReference type="EMDB" id="EMD-14978"/>
<dbReference type="EMDB" id="EMD-14979"/>
<dbReference type="EMDB" id="EMD-14990"/>
<dbReference type="EMDB" id="EMD-15296"/>
<dbReference type="EMDB" id="EMD-15423"/>
<dbReference type="EMDB" id="EMD-15424"/>
<dbReference type="EMDB" id="EMD-15425"/>
<dbReference type="EMDB" id="EMD-15426"/>
<dbReference type="EMDB" id="EMD-15427"/>
<dbReference type="EMDB" id="EMD-15428"/>
<dbReference type="EMDB" id="EMD-16086"/>
<dbReference type="EMDB" id="EMD-16090"/>
<dbReference type="EMDB" id="EMD-16127"/>
<dbReference type="EMDB" id="EMD-16182"/>
<dbReference type="EMDB" id="EMD-16563"/>
<dbReference type="EMDB" id="EMD-16591"/>
<dbReference type="EMDB" id="EMD-16594"/>
<dbReference type="EMDB" id="EMD-16609"/>
<dbReference type="EMDB" id="EMD-16616"/>
<dbReference type="EMDB" id="EMD-16634"/>
<dbReference type="EMDB" id="EMD-16648"/>
<dbReference type="EMDB" id="EMD-16684"/>
<dbReference type="EMDB" id="EMD-16702"/>
<dbReference type="EMDB" id="EMD-16729"/>
<dbReference type="EMDB" id="EMD-17552"/>
<dbReference type="EMDB" id="EMD-20077"/>
<dbReference type="EMDB" id="EMD-21859"/>
<dbReference type="EMDB" id="EMD-22196"/>
<dbReference type="EMDB" id="EMD-22198"/>
<dbReference type="EMDB" id="EMD-23934"/>
<dbReference type="EMDB" id="EMD-23935"/>
<dbReference type="EMDB" id="EMD-24235"/>
<dbReference type="EMDB" id="EMD-26033"/>
<dbReference type="EMDB" id="EMD-26034"/>
<dbReference type="EMDB" id="EMD-26485"/>
<dbReference type="EMDB" id="EMD-26651"/>
<dbReference type="EMDB" id="EMD-26686"/>
<dbReference type="EMDB" id="EMD-26703"/>
<dbReference type="EMDB" id="EMD-26941"/>
<dbReference type="EMDB" id="EMD-28610"/>
<dbReference type="EMDB" id="EMD-28632"/>
<dbReference type="EMDB" id="EMD-28633"/>
<dbReference type="EMDB" id="EMD-28634"/>
<dbReference type="EMDB" id="EMD-28635"/>
<dbReference type="EMDB" id="EMD-28636"/>
<dbReference type="EMDB" id="EMD-28642"/>
<dbReference type="EMDB" id="EMD-28643"/>
<dbReference type="EMDB" id="EMD-30108"/>
<dbReference type="EMDB" id="EMD-34725"/>
<dbReference type="EMDB" id="EMD-36839"/>
<dbReference type="EMDB" id="EMD-36945"/>
<dbReference type="EMDB" id="EMD-38660"/>
<dbReference type="EMDB" id="EMD-40990"/>
<dbReference type="EMDB" id="EMD-40991"/>
<dbReference type="EMDB" id="EMD-40992"/>
<dbReference type="EMDB" id="EMD-40993"/>
<dbReference type="EMDB" id="EMD-40997"/>
<dbReference type="EMDB" id="EMD-40998"/>
<dbReference type="EMDB" id="EMD-40999"/>
<dbReference type="EMDB" id="EMD-41000"/>
<dbReference type="EMDB" id="EMD-41001"/>
<dbReference type="EMDB" id="EMD-41002"/>
<dbReference type="EMDB" id="EMD-4140"/>
<dbReference type="EMDB" id="EMD-42525"/>
<dbReference type="EMDB" id="EMD-42540"/>
<dbReference type="EMDB" id="EMD-4302"/>
<dbReference type="EMDB" id="EMD-4427"/>
<dbReference type="EMDB" id="EMD-4474"/>
<dbReference type="EMDB" id="EMD-4560"/>
<dbReference type="EMDB" id="EMD-4630"/>
<dbReference type="EMDB" id="EMD-4636"/>
<dbReference type="EMDB" id="EMD-4751"/>
<dbReference type="EMDB" id="EMD-4752"/>
<dbReference type="EMDB" id="EMD-4753"/>
<dbReference type="EMDB" id="EMD-4884"/>
<dbReference type="EMDB" id="EMD-50259"/>
<dbReference type="EMDB" id="EMD-8123"/>
<dbReference type="EMDB" id="EMD-8362"/>
<dbReference type="EMDB" id="EMD-8368"/>
<dbReference type="SMR" id="P04650"/>
<dbReference type="BioGRID" id="33574">
    <property type="interactions" value="134"/>
</dbReference>
<dbReference type="ComplexPortal" id="CPX-1601">
    <property type="entry name" value="60S cytosolic large ribosomal subunit"/>
</dbReference>
<dbReference type="DIP" id="DIP-4522N"/>
<dbReference type="FunCoup" id="P04650">
    <property type="interactions" value="479"/>
</dbReference>
<dbReference type="IntAct" id="P04650">
    <property type="interactions" value="87"/>
</dbReference>
<dbReference type="MINT" id="P04650"/>
<dbReference type="STRING" id="4932.YJL189W"/>
<dbReference type="iPTMnet" id="P04650"/>
<dbReference type="PaxDb" id="4932-YJL189W"/>
<dbReference type="PeptideAtlas" id="P04650"/>
<dbReference type="TopDownProteomics" id="P04650"/>
<dbReference type="EnsemblFungi" id="YJL189W_mRNA">
    <property type="protein sequence ID" value="YJL189W"/>
    <property type="gene ID" value="YJL189W"/>
</dbReference>
<dbReference type="GeneID" id="853250"/>
<dbReference type="KEGG" id="sce:YJL189W"/>
<dbReference type="AGR" id="SGD:S000003725"/>
<dbReference type="SGD" id="S000003725">
    <property type="gene designation" value="RPL39"/>
</dbReference>
<dbReference type="VEuPathDB" id="FungiDB:YJL189W"/>
<dbReference type="eggNOG" id="KOG0002">
    <property type="taxonomic scope" value="Eukaryota"/>
</dbReference>
<dbReference type="GeneTree" id="ENSGT00940000175753"/>
<dbReference type="HOGENOM" id="CLU_181948_3_0_1"/>
<dbReference type="InParanoid" id="P04650"/>
<dbReference type="OMA" id="RRTKMNI"/>
<dbReference type="OrthoDB" id="6332053at2759"/>
<dbReference type="BioCyc" id="YEAST:G3O-31621-MONOMER"/>
<dbReference type="Reactome" id="R-SCE-156827">
    <property type="pathway name" value="L13a-mediated translational silencing of Ceruloplasmin expression"/>
</dbReference>
<dbReference type="Reactome" id="R-SCE-1799339">
    <property type="pathway name" value="SRP-dependent cotranslational protein targeting to membrane"/>
</dbReference>
<dbReference type="Reactome" id="R-SCE-72689">
    <property type="pathway name" value="Formation of a pool of free 40S subunits"/>
</dbReference>
<dbReference type="Reactome" id="R-SCE-72706">
    <property type="pathway name" value="GTP hydrolysis and joining of the 60S ribosomal subunit"/>
</dbReference>
<dbReference type="Reactome" id="R-SCE-975956">
    <property type="pathway name" value="Nonsense Mediated Decay (NMD) independent of the Exon Junction Complex (EJC)"/>
</dbReference>
<dbReference type="Reactome" id="R-SCE-975957">
    <property type="pathway name" value="Nonsense Mediated Decay (NMD) enhanced by the Exon Junction Complex (EJC)"/>
</dbReference>
<dbReference type="BioGRID-ORCS" id="853250">
    <property type="hits" value="8 hits in 10 CRISPR screens"/>
</dbReference>
<dbReference type="EvolutionaryTrace" id="P04650"/>
<dbReference type="PRO" id="PR:P04650"/>
<dbReference type="Proteomes" id="UP000002311">
    <property type="component" value="Chromosome X"/>
</dbReference>
<dbReference type="RNAct" id="P04650">
    <property type="molecule type" value="protein"/>
</dbReference>
<dbReference type="GO" id="GO:0005737">
    <property type="term" value="C:cytoplasm"/>
    <property type="evidence" value="ECO:0000303"/>
    <property type="project" value="ComplexPortal"/>
</dbReference>
<dbReference type="GO" id="GO:0005829">
    <property type="term" value="C:cytosol"/>
    <property type="evidence" value="ECO:0000304"/>
    <property type="project" value="Reactome"/>
</dbReference>
<dbReference type="GO" id="GO:0022625">
    <property type="term" value="C:cytosolic large ribosomal subunit"/>
    <property type="evidence" value="ECO:0000314"/>
    <property type="project" value="SGD"/>
</dbReference>
<dbReference type="GO" id="GO:0003735">
    <property type="term" value="F:structural constituent of ribosome"/>
    <property type="evidence" value="ECO:0000305"/>
    <property type="project" value="SGD"/>
</dbReference>
<dbReference type="GO" id="GO:0002181">
    <property type="term" value="P:cytoplasmic translation"/>
    <property type="evidence" value="ECO:0000303"/>
    <property type="project" value="ComplexPortal"/>
</dbReference>
<dbReference type="FunFam" id="1.10.1620.10:FF:000001">
    <property type="entry name" value="60S ribosomal protein-like L39"/>
    <property type="match status" value="1"/>
</dbReference>
<dbReference type="Gene3D" id="1.10.1620.10">
    <property type="entry name" value="Ribosomal protein L39e"/>
    <property type="match status" value="1"/>
</dbReference>
<dbReference type="HAMAP" id="MF_00629">
    <property type="entry name" value="Ribosomal_eL39"/>
    <property type="match status" value="1"/>
</dbReference>
<dbReference type="InterPro" id="IPR000077">
    <property type="entry name" value="Ribosomal_eL39"/>
</dbReference>
<dbReference type="InterPro" id="IPR020083">
    <property type="entry name" value="Ribosomal_eL39_CS"/>
</dbReference>
<dbReference type="InterPro" id="IPR023626">
    <property type="entry name" value="Ribosomal_eL39_dom_sf"/>
</dbReference>
<dbReference type="PANTHER" id="PTHR19970:SF0">
    <property type="entry name" value="LARGE RIBOSOMAL SUBUNIT PROTEIN EL39"/>
    <property type="match status" value="1"/>
</dbReference>
<dbReference type="PANTHER" id="PTHR19970">
    <property type="entry name" value="RIBOSOMAL PROTEIN L39E"/>
    <property type="match status" value="1"/>
</dbReference>
<dbReference type="Pfam" id="PF00832">
    <property type="entry name" value="Ribosomal_L39"/>
    <property type="match status" value="1"/>
</dbReference>
<dbReference type="SUPFAM" id="SSF48662">
    <property type="entry name" value="Ribosomal protein L39e"/>
    <property type="match status" value="1"/>
</dbReference>
<dbReference type="PROSITE" id="PS00051">
    <property type="entry name" value="RIBOSOMAL_L39E"/>
    <property type="match status" value="1"/>
</dbReference>
<protein>
    <recommendedName>
        <fullName evidence="5">Large ribosomal subunit protein eL39</fullName>
    </recommendedName>
    <alternativeName>
        <fullName evidence="6">60S ribosomal protein L39</fullName>
    </alternativeName>
    <alternativeName>
        <fullName>L46</fullName>
    </alternativeName>
    <alternativeName>
        <fullName>YL40</fullName>
    </alternativeName>
</protein>
<accession>P04650</accession>
<accession>D6VW02</accession>
<evidence type="ECO:0000256" key="1">
    <source>
        <dbReference type="SAM" id="MobiDB-lite"/>
    </source>
</evidence>
<evidence type="ECO:0000269" key="2">
    <source>
    </source>
</evidence>
<evidence type="ECO:0000269" key="3">
    <source>
    </source>
</evidence>
<evidence type="ECO:0000269" key="4">
    <source>
    </source>
</evidence>
<evidence type="ECO:0000303" key="5">
    <source>
    </source>
</evidence>
<evidence type="ECO:0000303" key="6">
    <source>
    </source>
</evidence>
<evidence type="ECO:0000305" key="7"/>
<evidence type="ECO:0000305" key="8">
    <source>
    </source>
</evidence>
<evidence type="ECO:0000305" key="9">
    <source>
    </source>
</evidence>
<evidence type="ECO:0007829" key="10">
    <source>
        <dbReference type="PDB" id="4U4R"/>
    </source>
</evidence>
<name>RL39_YEAST</name>